<sequence>MSKQFGKVGVLYGGRSAEREVSLMSGKGVHEALLSAGVDAHLFDTGERSLADLAAAGFERVFIALHGRYGEDGTLQGALELLGIPYTGSGPLASSLSMDKIMTKRVWLQHGLPTPAFEVLGGSTELRLVPDRLGLPLILKPPHEGSTVGITKVAGYSDMKAAYELAARFDAEVLAEQFITGRELTVAVLGSGAAARALPVIEIVAPGGNYDYEHKYFSDDTQYFCPADLPADVAADVAAVAERAYAALGCEGWGRVDFILDRENRPWLLEMNTSPGMTGHSLVPMAARAVGMSYADLCVAILAEAACKVRSPARQD</sequence>
<gene>
    <name evidence="2" type="primary">ddl</name>
    <name type="synonym">ddlB</name>
    <name type="ordered locus">BP3021</name>
</gene>
<keyword id="KW-0067">ATP-binding</keyword>
<keyword id="KW-0133">Cell shape</keyword>
<keyword id="KW-0961">Cell wall biogenesis/degradation</keyword>
<keyword id="KW-0963">Cytoplasm</keyword>
<keyword id="KW-0436">Ligase</keyword>
<keyword id="KW-0460">Magnesium</keyword>
<keyword id="KW-0464">Manganese</keyword>
<keyword id="KW-0479">Metal-binding</keyword>
<keyword id="KW-0547">Nucleotide-binding</keyword>
<keyword id="KW-0573">Peptidoglycan synthesis</keyword>
<keyword id="KW-1185">Reference proteome</keyword>
<name>DDL_BORPE</name>
<organism>
    <name type="scientific">Bordetella pertussis (strain Tohama I / ATCC BAA-589 / NCTC 13251)</name>
    <dbReference type="NCBI Taxonomy" id="257313"/>
    <lineage>
        <taxon>Bacteria</taxon>
        <taxon>Pseudomonadati</taxon>
        <taxon>Pseudomonadota</taxon>
        <taxon>Betaproteobacteria</taxon>
        <taxon>Burkholderiales</taxon>
        <taxon>Alcaligenaceae</taxon>
        <taxon>Bordetella</taxon>
    </lineage>
</organism>
<proteinExistence type="inferred from homology"/>
<reference key="1">
    <citation type="journal article" date="2003" name="Nat. Genet.">
        <title>Comparative analysis of the genome sequences of Bordetella pertussis, Bordetella parapertussis and Bordetella bronchiseptica.</title>
        <authorList>
            <person name="Parkhill J."/>
            <person name="Sebaihia M."/>
            <person name="Preston A."/>
            <person name="Murphy L.D."/>
            <person name="Thomson N.R."/>
            <person name="Harris D.E."/>
            <person name="Holden M.T.G."/>
            <person name="Churcher C.M."/>
            <person name="Bentley S.D."/>
            <person name="Mungall K.L."/>
            <person name="Cerdeno-Tarraga A.-M."/>
            <person name="Temple L."/>
            <person name="James K.D."/>
            <person name="Harris B."/>
            <person name="Quail M.A."/>
            <person name="Achtman M."/>
            <person name="Atkin R."/>
            <person name="Baker S."/>
            <person name="Basham D."/>
            <person name="Bason N."/>
            <person name="Cherevach I."/>
            <person name="Chillingworth T."/>
            <person name="Collins M."/>
            <person name="Cronin A."/>
            <person name="Davis P."/>
            <person name="Doggett J."/>
            <person name="Feltwell T."/>
            <person name="Goble A."/>
            <person name="Hamlin N."/>
            <person name="Hauser H."/>
            <person name="Holroyd S."/>
            <person name="Jagels K."/>
            <person name="Leather S."/>
            <person name="Moule S."/>
            <person name="Norberczak H."/>
            <person name="O'Neil S."/>
            <person name="Ormond D."/>
            <person name="Price C."/>
            <person name="Rabbinowitsch E."/>
            <person name="Rutter S."/>
            <person name="Sanders M."/>
            <person name="Saunders D."/>
            <person name="Seeger K."/>
            <person name="Sharp S."/>
            <person name="Simmonds M."/>
            <person name="Skelton J."/>
            <person name="Squares R."/>
            <person name="Squares S."/>
            <person name="Stevens K."/>
            <person name="Unwin L."/>
            <person name="Whitehead S."/>
            <person name="Barrell B.G."/>
            <person name="Maskell D.J."/>
        </authorList>
    </citation>
    <scope>NUCLEOTIDE SEQUENCE [LARGE SCALE GENOMIC DNA]</scope>
    <source>
        <strain>Tohama I / ATCC BAA-589 / NCTC 13251</strain>
    </source>
</reference>
<comment type="function">
    <text evidence="2">Cell wall formation.</text>
</comment>
<comment type="catalytic activity">
    <reaction evidence="2">
        <text>2 D-alanine + ATP = D-alanyl-D-alanine + ADP + phosphate + H(+)</text>
        <dbReference type="Rhea" id="RHEA:11224"/>
        <dbReference type="ChEBI" id="CHEBI:15378"/>
        <dbReference type="ChEBI" id="CHEBI:30616"/>
        <dbReference type="ChEBI" id="CHEBI:43474"/>
        <dbReference type="ChEBI" id="CHEBI:57416"/>
        <dbReference type="ChEBI" id="CHEBI:57822"/>
        <dbReference type="ChEBI" id="CHEBI:456216"/>
        <dbReference type="EC" id="6.3.2.4"/>
    </reaction>
</comment>
<comment type="cofactor">
    <cofactor evidence="1">
        <name>Mg(2+)</name>
        <dbReference type="ChEBI" id="CHEBI:18420"/>
    </cofactor>
    <cofactor evidence="1">
        <name>Mn(2+)</name>
        <dbReference type="ChEBI" id="CHEBI:29035"/>
    </cofactor>
    <text evidence="1">Binds 2 magnesium or manganese ions per subunit.</text>
</comment>
<comment type="pathway">
    <text evidence="2">Cell wall biogenesis; peptidoglycan biosynthesis.</text>
</comment>
<comment type="subcellular location">
    <subcellularLocation>
        <location evidence="2">Cytoplasm</location>
    </subcellularLocation>
</comment>
<comment type="similarity">
    <text evidence="2">Belongs to the D-alanine--D-alanine ligase family.</text>
</comment>
<dbReference type="EC" id="6.3.2.4" evidence="2"/>
<dbReference type="EMBL" id="BX640420">
    <property type="protein sequence ID" value="CAE43292.1"/>
    <property type="molecule type" value="Genomic_DNA"/>
</dbReference>
<dbReference type="RefSeq" id="NP_881596.1">
    <property type="nucleotide sequence ID" value="NC_002929.2"/>
</dbReference>
<dbReference type="RefSeq" id="WP_003814571.1">
    <property type="nucleotide sequence ID" value="NZ_CP039022.1"/>
</dbReference>
<dbReference type="SMR" id="Q7VUQ5"/>
<dbReference type="STRING" id="257313.BP3021"/>
<dbReference type="PaxDb" id="257313-BP3021"/>
<dbReference type="KEGG" id="bpe:BP3021"/>
<dbReference type="PATRIC" id="fig|257313.5.peg.3267"/>
<dbReference type="eggNOG" id="COG1181">
    <property type="taxonomic scope" value="Bacteria"/>
</dbReference>
<dbReference type="HOGENOM" id="CLU_039268_1_2_4"/>
<dbReference type="UniPathway" id="UPA00219"/>
<dbReference type="Proteomes" id="UP000002676">
    <property type="component" value="Chromosome"/>
</dbReference>
<dbReference type="GO" id="GO:0005829">
    <property type="term" value="C:cytosol"/>
    <property type="evidence" value="ECO:0007669"/>
    <property type="project" value="TreeGrafter"/>
</dbReference>
<dbReference type="GO" id="GO:0005524">
    <property type="term" value="F:ATP binding"/>
    <property type="evidence" value="ECO:0007669"/>
    <property type="project" value="UniProtKB-KW"/>
</dbReference>
<dbReference type="GO" id="GO:0008716">
    <property type="term" value="F:D-alanine-D-alanine ligase activity"/>
    <property type="evidence" value="ECO:0007669"/>
    <property type="project" value="UniProtKB-UniRule"/>
</dbReference>
<dbReference type="GO" id="GO:0046872">
    <property type="term" value="F:metal ion binding"/>
    <property type="evidence" value="ECO:0007669"/>
    <property type="project" value="UniProtKB-KW"/>
</dbReference>
<dbReference type="GO" id="GO:0071555">
    <property type="term" value="P:cell wall organization"/>
    <property type="evidence" value="ECO:0007669"/>
    <property type="project" value="UniProtKB-KW"/>
</dbReference>
<dbReference type="GO" id="GO:0009252">
    <property type="term" value="P:peptidoglycan biosynthetic process"/>
    <property type="evidence" value="ECO:0007669"/>
    <property type="project" value="UniProtKB-UniRule"/>
</dbReference>
<dbReference type="GO" id="GO:0008360">
    <property type="term" value="P:regulation of cell shape"/>
    <property type="evidence" value="ECO:0007669"/>
    <property type="project" value="UniProtKB-KW"/>
</dbReference>
<dbReference type="FunFam" id="3.30.470.20:FF:000008">
    <property type="entry name" value="D-alanine--D-alanine ligase"/>
    <property type="match status" value="1"/>
</dbReference>
<dbReference type="FunFam" id="3.40.50.20:FF:000013">
    <property type="entry name" value="D-alanine--D-alanine ligase"/>
    <property type="match status" value="1"/>
</dbReference>
<dbReference type="Gene3D" id="3.40.50.20">
    <property type="match status" value="1"/>
</dbReference>
<dbReference type="Gene3D" id="3.30.1490.20">
    <property type="entry name" value="ATP-grasp fold, A domain"/>
    <property type="match status" value="1"/>
</dbReference>
<dbReference type="Gene3D" id="3.30.470.20">
    <property type="entry name" value="ATP-grasp fold, B domain"/>
    <property type="match status" value="1"/>
</dbReference>
<dbReference type="HAMAP" id="MF_00047">
    <property type="entry name" value="Dala_Dala_lig"/>
    <property type="match status" value="1"/>
</dbReference>
<dbReference type="InterPro" id="IPR011761">
    <property type="entry name" value="ATP-grasp"/>
</dbReference>
<dbReference type="InterPro" id="IPR013815">
    <property type="entry name" value="ATP_grasp_subdomain_1"/>
</dbReference>
<dbReference type="InterPro" id="IPR000291">
    <property type="entry name" value="D-Ala_lig_Van_CS"/>
</dbReference>
<dbReference type="InterPro" id="IPR005905">
    <property type="entry name" value="D_ala_D_ala"/>
</dbReference>
<dbReference type="InterPro" id="IPR011095">
    <property type="entry name" value="Dala_Dala_lig_C"/>
</dbReference>
<dbReference type="InterPro" id="IPR011127">
    <property type="entry name" value="Dala_Dala_lig_N"/>
</dbReference>
<dbReference type="InterPro" id="IPR016185">
    <property type="entry name" value="PreATP-grasp_dom_sf"/>
</dbReference>
<dbReference type="NCBIfam" id="TIGR01205">
    <property type="entry name" value="D_ala_D_alaTIGR"/>
    <property type="match status" value="1"/>
</dbReference>
<dbReference type="NCBIfam" id="NF002378">
    <property type="entry name" value="PRK01372.1"/>
    <property type="match status" value="1"/>
</dbReference>
<dbReference type="PANTHER" id="PTHR23132">
    <property type="entry name" value="D-ALANINE--D-ALANINE LIGASE"/>
    <property type="match status" value="1"/>
</dbReference>
<dbReference type="PANTHER" id="PTHR23132:SF23">
    <property type="entry name" value="D-ALANINE--D-ALANINE LIGASE B"/>
    <property type="match status" value="1"/>
</dbReference>
<dbReference type="Pfam" id="PF07478">
    <property type="entry name" value="Dala_Dala_lig_C"/>
    <property type="match status" value="1"/>
</dbReference>
<dbReference type="Pfam" id="PF01820">
    <property type="entry name" value="Dala_Dala_lig_N"/>
    <property type="match status" value="1"/>
</dbReference>
<dbReference type="PIRSF" id="PIRSF039102">
    <property type="entry name" value="Ddl/VanB"/>
    <property type="match status" value="1"/>
</dbReference>
<dbReference type="SUPFAM" id="SSF56059">
    <property type="entry name" value="Glutathione synthetase ATP-binding domain-like"/>
    <property type="match status" value="1"/>
</dbReference>
<dbReference type="SUPFAM" id="SSF52440">
    <property type="entry name" value="PreATP-grasp domain"/>
    <property type="match status" value="1"/>
</dbReference>
<dbReference type="PROSITE" id="PS50975">
    <property type="entry name" value="ATP_GRASP"/>
    <property type="match status" value="1"/>
</dbReference>
<dbReference type="PROSITE" id="PS00843">
    <property type="entry name" value="DALA_DALA_LIGASE_1"/>
    <property type="match status" value="1"/>
</dbReference>
<dbReference type="PROSITE" id="PS00844">
    <property type="entry name" value="DALA_DALA_LIGASE_2"/>
    <property type="match status" value="1"/>
</dbReference>
<feature type="chain" id="PRO_0000177791" description="D-alanine--D-alanine ligase">
    <location>
        <begin position="1"/>
        <end position="316"/>
    </location>
</feature>
<feature type="domain" description="ATP-grasp" evidence="2">
    <location>
        <begin position="104"/>
        <end position="303"/>
    </location>
</feature>
<feature type="binding site" evidence="2">
    <location>
        <begin position="130"/>
        <end position="185"/>
    </location>
    <ligand>
        <name>ATP</name>
        <dbReference type="ChEBI" id="CHEBI:30616"/>
    </ligand>
</feature>
<feature type="binding site" evidence="2">
    <location>
        <position position="257"/>
    </location>
    <ligand>
        <name>Mg(2+)</name>
        <dbReference type="ChEBI" id="CHEBI:18420"/>
        <label>1</label>
    </ligand>
</feature>
<feature type="binding site" evidence="2">
    <location>
        <position position="270"/>
    </location>
    <ligand>
        <name>Mg(2+)</name>
        <dbReference type="ChEBI" id="CHEBI:18420"/>
        <label>1</label>
    </ligand>
</feature>
<feature type="binding site" evidence="2">
    <location>
        <position position="270"/>
    </location>
    <ligand>
        <name>Mg(2+)</name>
        <dbReference type="ChEBI" id="CHEBI:18420"/>
        <label>2</label>
    </ligand>
</feature>
<feature type="binding site" evidence="2">
    <location>
        <position position="272"/>
    </location>
    <ligand>
        <name>Mg(2+)</name>
        <dbReference type="ChEBI" id="CHEBI:18420"/>
        <label>2</label>
    </ligand>
</feature>
<accession>Q7VUQ5</accession>
<evidence type="ECO:0000250" key="1"/>
<evidence type="ECO:0000255" key="2">
    <source>
        <dbReference type="HAMAP-Rule" id="MF_00047"/>
    </source>
</evidence>
<protein>
    <recommendedName>
        <fullName evidence="2">D-alanine--D-alanine ligase</fullName>
        <ecNumber evidence="2">6.3.2.4</ecNumber>
    </recommendedName>
    <alternativeName>
        <fullName evidence="2">D-Ala-D-Ala ligase</fullName>
    </alternativeName>
    <alternativeName>
        <fullName evidence="2">D-alanylalanine synthetase</fullName>
    </alternativeName>
</protein>